<feature type="chain" id="PRO_0000103769" description="Uncharacterized protein Rv1128c">
    <location>
        <begin position="1"/>
        <end position="451"/>
    </location>
</feature>
<feature type="region of interest" description="Disordered" evidence="1">
    <location>
        <begin position="415"/>
        <end position="435"/>
    </location>
</feature>
<evidence type="ECO:0000256" key="1">
    <source>
        <dbReference type="SAM" id="MobiDB-lite"/>
    </source>
</evidence>
<evidence type="ECO:0000305" key="2"/>
<keyword id="KW-1185">Reference proteome</keyword>
<reference key="1">
    <citation type="journal article" date="1998" name="Nature">
        <title>Deciphering the biology of Mycobacterium tuberculosis from the complete genome sequence.</title>
        <authorList>
            <person name="Cole S.T."/>
            <person name="Brosch R."/>
            <person name="Parkhill J."/>
            <person name="Garnier T."/>
            <person name="Churcher C.M."/>
            <person name="Harris D.E."/>
            <person name="Gordon S.V."/>
            <person name="Eiglmeier K."/>
            <person name="Gas S."/>
            <person name="Barry C.E. III"/>
            <person name="Tekaia F."/>
            <person name="Badcock K."/>
            <person name="Basham D."/>
            <person name="Brown D."/>
            <person name="Chillingworth T."/>
            <person name="Connor R."/>
            <person name="Davies R.M."/>
            <person name="Devlin K."/>
            <person name="Feltwell T."/>
            <person name="Gentles S."/>
            <person name="Hamlin N."/>
            <person name="Holroyd S."/>
            <person name="Hornsby T."/>
            <person name="Jagels K."/>
            <person name="Krogh A."/>
            <person name="McLean J."/>
            <person name="Moule S."/>
            <person name="Murphy L.D."/>
            <person name="Oliver S."/>
            <person name="Osborne J."/>
            <person name="Quail M.A."/>
            <person name="Rajandream M.A."/>
            <person name="Rogers J."/>
            <person name="Rutter S."/>
            <person name="Seeger K."/>
            <person name="Skelton S."/>
            <person name="Squares S."/>
            <person name="Squares R."/>
            <person name="Sulston J.E."/>
            <person name="Taylor K."/>
            <person name="Whitehead S."/>
            <person name="Barrell B.G."/>
        </authorList>
    </citation>
    <scope>NUCLEOTIDE SEQUENCE [LARGE SCALE GENOMIC DNA]</scope>
    <source>
        <strain>ATCC 25618 / H37Rv</strain>
    </source>
</reference>
<proteinExistence type="inferred from homology"/>
<name>Y1128_MYCTU</name>
<dbReference type="EMBL" id="AL123456">
    <property type="protein sequence ID" value="CCP43882.1"/>
    <property type="molecule type" value="Genomic_DNA"/>
</dbReference>
<dbReference type="PIR" id="A70539">
    <property type="entry name" value="A70539"/>
</dbReference>
<dbReference type="RefSeq" id="NP_215644.1">
    <property type="nucleotide sequence ID" value="NC_000962.3"/>
</dbReference>
<dbReference type="RefSeq" id="WP_003906521.1">
    <property type="nucleotide sequence ID" value="NZ_NVQJ01000021.1"/>
</dbReference>
<dbReference type="STRING" id="83332.Rv1128c"/>
<dbReference type="PaxDb" id="83332-Rv1128c"/>
<dbReference type="DNASU" id="885849"/>
<dbReference type="GeneID" id="885849"/>
<dbReference type="KEGG" id="mtu:Rv1128c"/>
<dbReference type="KEGG" id="mtv:RVBD_1128c"/>
<dbReference type="TubercuList" id="Rv1128c"/>
<dbReference type="eggNOG" id="COG1403">
    <property type="taxonomic scope" value="Bacteria"/>
</dbReference>
<dbReference type="InParanoid" id="P9WM57"/>
<dbReference type="OrthoDB" id="4419061at2"/>
<dbReference type="PhylomeDB" id="P9WM57"/>
<dbReference type="Proteomes" id="UP000001584">
    <property type="component" value="Chromosome"/>
</dbReference>
<dbReference type="GO" id="GO:0009274">
    <property type="term" value="C:peptidoglycan-based cell wall"/>
    <property type="evidence" value="ECO:0007005"/>
    <property type="project" value="MTBBASE"/>
</dbReference>
<dbReference type="CDD" id="cd00085">
    <property type="entry name" value="HNHc"/>
    <property type="match status" value="1"/>
</dbReference>
<dbReference type="InterPro" id="IPR003870">
    <property type="entry name" value="DUF222"/>
</dbReference>
<dbReference type="InterPro" id="IPR003615">
    <property type="entry name" value="HNH_nuc"/>
</dbReference>
<dbReference type="Pfam" id="PF02720">
    <property type="entry name" value="DUF222"/>
    <property type="match status" value="1"/>
</dbReference>
<dbReference type="SMART" id="SM00507">
    <property type="entry name" value="HNHc"/>
    <property type="match status" value="1"/>
</dbReference>
<comment type="similarity">
    <text evidence="2">Belongs to the Rv1128c/1148c/1588c/1702c/1945/3466 family.</text>
</comment>
<gene>
    <name type="ordered locus">Rv1128c</name>
    <name type="ORF">MTCY22G8.17c</name>
</gene>
<protein>
    <recommendedName>
        <fullName>Uncharacterized protein Rv1128c</fullName>
    </recommendedName>
</protein>
<sequence length="451" mass="49275">MCSTREEITEAFASLATALSRVLGLTFDALTTPERLALLEHCETARRQLPSVEHTLINQIGEQSTEEELGGKLGLTLADRLRITRSEAKRRVAEAADLGQRRALTGEPLPPLLTATAKAQRHGLIGDGHVEVIRAFVHRLPSWVDLKTLEKAERDLAKQATQYRPDQLAKLAARIMDCLNPDGDYTDEDRARRRGLTLGKQDVDGMSRLSGYVTPELRATIEAVWAKLAAPGMCNPEQKAPCVNGAPSKEQARRDTRSCPQRNHDALNAELRSLLTSGNLGQHNGLPASIIVTTTLKDLEAAAGAGLTGGGTILPISDVIRLARHANHYLAIFDRGKALALYHTKRLASPAQRIMLYAKDSGCSAPGCDVPGYYCEVHHVTPYAQCRNTDVNDLTLGCGGHHPLAERGWTTRKNAHGDTEWLPPPHLDHGQPRVNTFHHPEKLLADDEGDP</sequence>
<accession>P9WM57</accession>
<accession>L0T8R4</accession>
<accession>O06580</accession>
<organism>
    <name type="scientific">Mycobacterium tuberculosis (strain ATCC 25618 / H37Rv)</name>
    <dbReference type="NCBI Taxonomy" id="83332"/>
    <lineage>
        <taxon>Bacteria</taxon>
        <taxon>Bacillati</taxon>
        <taxon>Actinomycetota</taxon>
        <taxon>Actinomycetes</taxon>
        <taxon>Mycobacteriales</taxon>
        <taxon>Mycobacteriaceae</taxon>
        <taxon>Mycobacterium</taxon>
        <taxon>Mycobacterium tuberculosis complex</taxon>
    </lineage>
</organism>